<dbReference type="EC" id="2.7.7.-" evidence="1"/>
<dbReference type="EC" id="2.7.7.108" evidence="1"/>
<dbReference type="EMBL" id="CP000264">
    <property type="protein sequence ID" value="ABD54719.1"/>
    <property type="molecule type" value="Genomic_DNA"/>
</dbReference>
<dbReference type="RefSeq" id="WP_011454924.1">
    <property type="nucleotide sequence ID" value="NC_007802.1"/>
</dbReference>
<dbReference type="SMR" id="Q28RE3"/>
<dbReference type="STRING" id="290400.Jann_1802"/>
<dbReference type="KEGG" id="jan:Jann_1802"/>
<dbReference type="eggNOG" id="COG0397">
    <property type="taxonomic scope" value="Bacteria"/>
</dbReference>
<dbReference type="HOGENOM" id="CLU_010245_4_0_5"/>
<dbReference type="OrthoDB" id="9776281at2"/>
<dbReference type="Proteomes" id="UP000008326">
    <property type="component" value="Chromosome"/>
</dbReference>
<dbReference type="GO" id="GO:0070733">
    <property type="term" value="F:AMPylase activity"/>
    <property type="evidence" value="ECO:0007669"/>
    <property type="project" value="RHEA"/>
</dbReference>
<dbReference type="GO" id="GO:0005524">
    <property type="term" value="F:ATP binding"/>
    <property type="evidence" value="ECO:0007669"/>
    <property type="project" value="UniProtKB-UniRule"/>
</dbReference>
<dbReference type="GO" id="GO:0000287">
    <property type="term" value="F:magnesium ion binding"/>
    <property type="evidence" value="ECO:0007669"/>
    <property type="project" value="UniProtKB-UniRule"/>
</dbReference>
<dbReference type="HAMAP" id="MF_00692">
    <property type="entry name" value="YdiU_SelO"/>
    <property type="match status" value="1"/>
</dbReference>
<dbReference type="InterPro" id="IPR003846">
    <property type="entry name" value="SelO"/>
</dbReference>
<dbReference type="NCBIfam" id="NF000658">
    <property type="entry name" value="PRK00029.1"/>
    <property type="match status" value="1"/>
</dbReference>
<dbReference type="PANTHER" id="PTHR32057">
    <property type="entry name" value="PROTEIN ADENYLYLTRANSFERASE SELO, MITOCHONDRIAL"/>
    <property type="match status" value="1"/>
</dbReference>
<dbReference type="PANTHER" id="PTHR32057:SF14">
    <property type="entry name" value="PROTEIN ADENYLYLTRANSFERASE SELO, MITOCHONDRIAL"/>
    <property type="match status" value="1"/>
</dbReference>
<dbReference type="Pfam" id="PF02696">
    <property type="entry name" value="SelO"/>
    <property type="match status" value="1"/>
</dbReference>
<protein>
    <recommendedName>
        <fullName evidence="1">Protein nucleotidyltransferase YdiU</fullName>
        <ecNumber evidence="1">2.7.7.-</ecNumber>
    </recommendedName>
    <alternativeName>
        <fullName evidence="1">Protein adenylyltransferase YdiU</fullName>
        <ecNumber evidence="1">2.7.7.108</ecNumber>
    </alternativeName>
    <alternativeName>
        <fullName evidence="1">Protein uridylyltransferase YdiU</fullName>
        <ecNumber evidence="1">2.7.7.-</ecNumber>
    </alternativeName>
</protein>
<gene>
    <name evidence="1" type="primary">ydiU</name>
    <name evidence="1" type="synonym">selO</name>
    <name type="ordered locus">Jann_1802</name>
</gene>
<comment type="function">
    <text evidence="1">Nucleotidyltransferase involved in the post-translational modification of proteins. It can catalyze the addition of adenosine monophosphate (AMP) or uridine monophosphate (UMP) to a protein, resulting in modifications known as AMPylation and UMPylation.</text>
</comment>
<comment type="catalytic activity">
    <reaction evidence="1">
        <text>L-seryl-[protein] + ATP = 3-O-(5'-adenylyl)-L-seryl-[protein] + diphosphate</text>
        <dbReference type="Rhea" id="RHEA:58120"/>
        <dbReference type="Rhea" id="RHEA-COMP:9863"/>
        <dbReference type="Rhea" id="RHEA-COMP:15073"/>
        <dbReference type="ChEBI" id="CHEBI:29999"/>
        <dbReference type="ChEBI" id="CHEBI:30616"/>
        <dbReference type="ChEBI" id="CHEBI:33019"/>
        <dbReference type="ChEBI" id="CHEBI:142516"/>
        <dbReference type="EC" id="2.7.7.108"/>
    </reaction>
</comment>
<comment type="catalytic activity">
    <reaction evidence="1">
        <text>L-threonyl-[protein] + ATP = 3-O-(5'-adenylyl)-L-threonyl-[protein] + diphosphate</text>
        <dbReference type="Rhea" id="RHEA:54292"/>
        <dbReference type="Rhea" id="RHEA-COMP:11060"/>
        <dbReference type="Rhea" id="RHEA-COMP:13847"/>
        <dbReference type="ChEBI" id="CHEBI:30013"/>
        <dbReference type="ChEBI" id="CHEBI:30616"/>
        <dbReference type="ChEBI" id="CHEBI:33019"/>
        <dbReference type="ChEBI" id="CHEBI:138113"/>
        <dbReference type="EC" id="2.7.7.108"/>
    </reaction>
</comment>
<comment type="catalytic activity">
    <reaction evidence="1">
        <text>L-tyrosyl-[protein] + ATP = O-(5'-adenylyl)-L-tyrosyl-[protein] + diphosphate</text>
        <dbReference type="Rhea" id="RHEA:54288"/>
        <dbReference type="Rhea" id="RHEA-COMP:10136"/>
        <dbReference type="Rhea" id="RHEA-COMP:13846"/>
        <dbReference type="ChEBI" id="CHEBI:30616"/>
        <dbReference type="ChEBI" id="CHEBI:33019"/>
        <dbReference type="ChEBI" id="CHEBI:46858"/>
        <dbReference type="ChEBI" id="CHEBI:83624"/>
        <dbReference type="EC" id="2.7.7.108"/>
    </reaction>
</comment>
<comment type="catalytic activity">
    <reaction evidence="1">
        <text>L-histidyl-[protein] + UTP = N(tele)-(5'-uridylyl)-L-histidyl-[protein] + diphosphate</text>
        <dbReference type="Rhea" id="RHEA:83891"/>
        <dbReference type="Rhea" id="RHEA-COMP:9745"/>
        <dbReference type="Rhea" id="RHEA-COMP:20239"/>
        <dbReference type="ChEBI" id="CHEBI:29979"/>
        <dbReference type="ChEBI" id="CHEBI:33019"/>
        <dbReference type="ChEBI" id="CHEBI:46398"/>
        <dbReference type="ChEBI" id="CHEBI:233474"/>
    </reaction>
</comment>
<comment type="catalytic activity">
    <reaction evidence="1">
        <text>L-seryl-[protein] + UTP = O-(5'-uridylyl)-L-seryl-[protein] + diphosphate</text>
        <dbReference type="Rhea" id="RHEA:64604"/>
        <dbReference type="Rhea" id="RHEA-COMP:9863"/>
        <dbReference type="Rhea" id="RHEA-COMP:16635"/>
        <dbReference type="ChEBI" id="CHEBI:29999"/>
        <dbReference type="ChEBI" id="CHEBI:33019"/>
        <dbReference type="ChEBI" id="CHEBI:46398"/>
        <dbReference type="ChEBI" id="CHEBI:156051"/>
    </reaction>
</comment>
<comment type="catalytic activity">
    <reaction evidence="1">
        <text>L-tyrosyl-[protein] + UTP = O-(5'-uridylyl)-L-tyrosyl-[protein] + diphosphate</text>
        <dbReference type="Rhea" id="RHEA:83887"/>
        <dbReference type="Rhea" id="RHEA-COMP:10136"/>
        <dbReference type="Rhea" id="RHEA-COMP:20238"/>
        <dbReference type="ChEBI" id="CHEBI:33019"/>
        <dbReference type="ChEBI" id="CHEBI:46398"/>
        <dbReference type="ChEBI" id="CHEBI:46858"/>
        <dbReference type="ChEBI" id="CHEBI:90602"/>
    </reaction>
</comment>
<comment type="cofactor">
    <cofactor evidence="1">
        <name>Mg(2+)</name>
        <dbReference type="ChEBI" id="CHEBI:18420"/>
    </cofactor>
    <cofactor evidence="1">
        <name>Mn(2+)</name>
        <dbReference type="ChEBI" id="CHEBI:29035"/>
    </cofactor>
</comment>
<comment type="similarity">
    <text evidence="1">Belongs to the SELO family.</text>
</comment>
<feature type="chain" id="PRO_0000271830" description="Protein nucleotidyltransferase YdiU">
    <location>
        <begin position="1"/>
        <end position="480"/>
    </location>
</feature>
<feature type="active site" description="Proton acceptor" evidence="1">
    <location>
        <position position="245"/>
    </location>
</feature>
<feature type="binding site" evidence="1">
    <location>
        <position position="87"/>
    </location>
    <ligand>
        <name>ATP</name>
        <dbReference type="ChEBI" id="CHEBI:30616"/>
    </ligand>
</feature>
<feature type="binding site" evidence="1">
    <location>
        <position position="89"/>
    </location>
    <ligand>
        <name>ATP</name>
        <dbReference type="ChEBI" id="CHEBI:30616"/>
    </ligand>
</feature>
<feature type="binding site" evidence="1">
    <location>
        <position position="90"/>
    </location>
    <ligand>
        <name>ATP</name>
        <dbReference type="ChEBI" id="CHEBI:30616"/>
    </ligand>
</feature>
<feature type="binding site" evidence="1">
    <location>
        <position position="110"/>
    </location>
    <ligand>
        <name>ATP</name>
        <dbReference type="ChEBI" id="CHEBI:30616"/>
    </ligand>
</feature>
<feature type="binding site" evidence="1">
    <location>
        <position position="122"/>
    </location>
    <ligand>
        <name>ATP</name>
        <dbReference type="ChEBI" id="CHEBI:30616"/>
    </ligand>
</feature>
<feature type="binding site" evidence="1">
    <location>
        <position position="123"/>
    </location>
    <ligand>
        <name>ATP</name>
        <dbReference type="ChEBI" id="CHEBI:30616"/>
    </ligand>
</feature>
<feature type="binding site" evidence="1">
    <location>
        <position position="173"/>
    </location>
    <ligand>
        <name>ATP</name>
        <dbReference type="ChEBI" id="CHEBI:30616"/>
    </ligand>
</feature>
<feature type="binding site" evidence="1">
    <location>
        <position position="180"/>
    </location>
    <ligand>
        <name>ATP</name>
        <dbReference type="ChEBI" id="CHEBI:30616"/>
    </ligand>
</feature>
<feature type="binding site" evidence="1">
    <location>
        <position position="246"/>
    </location>
    <ligand>
        <name>Mg(2+)</name>
        <dbReference type="ChEBI" id="CHEBI:18420"/>
    </ligand>
</feature>
<feature type="binding site" evidence="1">
    <location>
        <position position="255"/>
    </location>
    <ligand>
        <name>ATP</name>
        <dbReference type="ChEBI" id="CHEBI:30616"/>
    </ligand>
</feature>
<feature type="binding site" evidence="1">
    <location>
        <position position="255"/>
    </location>
    <ligand>
        <name>Mg(2+)</name>
        <dbReference type="ChEBI" id="CHEBI:18420"/>
    </ligand>
</feature>
<accession>Q28RE3</accession>
<proteinExistence type="inferred from homology"/>
<keyword id="KW-0067">ATP-binding</keyword>
<keyword id="KW-0460">Magnesium</keyword>
<keyword id="KW-0464">Manganese</keyword>
<keyword id="KW-0479">Metal-binding</keyword>
<keyword id="KW-0547">Nucleotide-binding</keyword>
<keyword id="KW-0548">Nucleotidyltransferase</keyword>
<keyword id="KW-1185">Reference proteome</keyword>
<keyword id="KW-0808">Transferase</keyword>
<name>SELO_JANSC</name>
<organism>
    <name type="scientific">Jannaschia sp. (strain CCS1)</name>
    <dbReference type="NCBI Taxonomy" id="290400"/>
    <lineage>
        <taxon>Bacteria</taxon>
        <taxon>Pseudomonadati</taxon>
        <taxon>Pseudomonadota</taxon>
        <taxon>Alphaproteobacteria</taxon>
        <taxon>Rhodobacterales</taxon>
        <taxon>Roseobacteraceae</taxon>
        <taxon>Jannaschia</taxon>
    </lineage>
</organism>
<evidence type="ECO:0000255" key="1">
    <source>
        <dbReference type="HAMAP-Rule" id="MF_00692"/>
    </source>
</evidence>
<sequence length="480" mass="51792">MPDAFPFDNTYASLPDRFFTRMSPKPVAEPGLIAVNRPLAERLGITLGESDAELAQLFAGNVVPMGAAPLAQVYAGHQFGGWSQQLGDGRAVMLGEVVAPDGARFDVQLKGAGQTPYSRMGDGRAWLGPVLREYIVSEAMAALGIPTTRALAAVTTGEIVLREARMPGAVLTRVAASHIRVGTFQYFAARQDVDALQALLDHTIARHYPDVDGPSGLLDAALQAQADLIAKWMGVGFIHGVMNTDNMTLSGETIDYGPCAFMDTYEANKVFSSIDQFGRYAYAQQPQIAAWNLAQLATALLPLMPDRDAAIEEFTEAVNGFAARFDTAWHGVLRAKLGLVSEQEGDAQLAFDLLNRMEQGGGDFTQVFRALSGPEPERAAEAFAAPAVLAPWLKAWRARLARDNVAKAARIASMQADNPALIPRNHRIEEVIQAAVKGDFAPFERLTTALQDPFTDRPEFADLQATPARSEAVTQTFCGT</sequence>
<reference key="1">
    <citation type="submission" date="2006-02" db="EMBL/GenBank/DDBJ databases">
        <title>Complete sequence of chromosome of Jannaschia sp. CCS1.</title>
        <authorList>
            <consortium name="US DOE Joint Genome Institute"/>
            <person name="Copeland A."/>
            <person name="Lucas S."/>
            <person name="Lapidus A."/>
            <person name="Barry K."/>
            <person name="Detter J.C."/>
            <person name="Glavina del Rio T."/>
            <person name="Hammon N."/>
            <person name="Israni S."/>
            <person name="Pitluck S."/>
            <person name="Brettin T."/>
            <person name="Bruce D."/>
            <person name="Han C."/>
            <person name="Tapia R."/>
            <person name="Gilna P."/>
            <person name="Chertkov O."/>
            <person name="Saunders E."/>
            <person name="Schmutz J."/>
            <person name="Larimer F."/>
            <person name="Land M."/>
            <person name="Kyrpides N."/>
            <person name="Lykidis A."/>
            <person name="Moran M.A."/>
            <person name="Belas R."/>
            <person name="Ye W."/>
            <person name="Buchan A."/>
            <person name="Gonzalez J.M."/>
            <person name="Schell M.A."/>
            <person name="Richardson P."/>
        </authorList>
    </citation>
    <scope>NUCLEOTIDE SEQUENCE [LARGE SCALE GENOMIC DNA]</scope>
    <source>
        <strain>CCS1</strain>
    </source>
</reference>